<keyword id="KW-0501">Molybdenum cofactor biosynthesis</keyword>
<keyword id="KW-0808">Transferase</keyword>
<proteinExistence type="inferred from homology"/>
<gene>
    <name type="primary">moaE</name>
    <name type="ordered locus">STY0840</name>
    <name type="ordered locus">t2081</name>
</gene>
<feature type="chain" id="PRO_0000163095" description="Molybdopterin synthase catalytic subunit">
    <location>
        <begin position="1"/>
        <end position="150"/>
    </location>
</feature>
<feature type="binding site" evidence="1">
    <location>
        <begin position="37"/>
        <end position="39"/>
    </location>
    <ligand>
        <name>substrate</name>
    </ligand>
</feature>
<feature type="binding site" evidence="1">
    <location>
        <begin position="103"/>
        <end position="104"/>
    </location>
    <ligand>
        <name>substrate</name>
    </ligand>
</feature>
<feature type="binding site" evidence="1">
    <location>
        <position position="119"/>
    </location>
    <ligand>
        <name>substrate</name>
    </ligand>
</feature>
<feature type="binding site" evidence="1">
    <location>
        <begin position="126"/>
        <end position="128"/>
    </location>
    <ligand>
        <name>substrate</name>
    </ligand>
</feature>
<sequence length="150" mass="16892">MHETRIVVGPAPFSVGEEYSWLAARDEDGAVVTFTGKVRNHNLGDSVKALTLEHYPGMTEKALAEIVAKARSRWPLGRVTVIHRVGELWPGDEIVFVGVTSAHRSSAFDAGQFIMDYLKTRAPFWKREATPEGDRWVEARDSDQQLAKRW</sequence>
<name>MOAE_SALTI</name>
<protein>
    <recommendedName>
        <fullName>Molybdopterin synthase catalytic subunit</fullName>
        <ecNumber>2.8.1.12</ecNumber>
    </recommendedName>
    <alternativeName>
        <fullName>MPT synthase subunit 2</fullName>
    </alternativeName>
    <alternativeName>
        <fullName>Molybdenum cofactor biosynthesis protein E</fullName>
    </alternativeName>
    <alternativeName>
        <fullName>Molybdopterin-converting factor large subunit</fullName>
    </alternativeName>
    <alternativeName>
        <fullName>Molybdopterin-converting factor subunit 2</fullName>
    </alternativeName>
</protein>
<dbReference type="EC" id="2.8.1.12"/>
<dbReference type="EMBL" id="AL513382">
    <property type="protein sequence ID" value="CAD05254.1"/>
    <property type="molecule type" value="Genomic_DNA"/>
</dbReference>
<dbReference type="EMBL" id="AE014613">
    <property type="protein sequence ID" value="AAO69699.1"/>
    <property type="molecule type" value="Genomic_DNA"/>
</dbReference>
<dbReference type="RefSeq" id="NP_455347.1">
    <property type="nucleotide sequence ID" value="NC_003198.1"/>
</dbReference>
<dbReference type="RefSeq" id="WP_000545202.1">
    <property type="nucleotide sequence ID" value="NZ_WSUR01000021.1"/>
</dbReference>
<dbReference type="SMR" id="P65399"/>
<dbReference type="STRING" id="220341.gene:17584844"/>
<dbReference type="KEGG" id="stt:t2081"/>
<dbReference type="KEGG" id="sty:STY0840"/>
<dbReference type="PATRIC" id="fig|220341.7.peg.845"/>
<dbReference type="eggNOG" id="COG0314">
    <property type="taxonomic scope" value="Bacteria"/>
</dbReference>
<dbReference type="HOGENOM" id="CLU_089568_2_1_6"/>
<dbReference type="OMA" id="WKHQFFA"/>
<dbReference type="OrthoDB" id="9803224at2"/>
<dbReference type="UniPathway" id="UPA00344"/>
<dbReference type="Proteomes" id="UP000000541">
    <property type="component" value="Chromosome"/>
</dbReference>
<dbReference type="Proteomes" id="UP000002670">
    <property type="component" value="Chromosome"/>
</dbReference>
<dbReference type="GO" id="GO:0030366">
    <property type="term" value="F:molybdopterin synthase activity"/>
    <property type="evidence" value="ECO:0007669"/>
    <property type="project" value="UniProtKB-EC"/>
</dbReference>
<dbReference type="GO" id="GO:0006777">
    <property type="term" value="P:Mo-molybdopterin cofactor biosynthetic process"/>
    <property type="evidence" value="ECO:0007669"/>
    <property type="project" value="UniProtKB-KW"/>
</dbReference>
<dbReference type="CDD" id="cd00756">
    <property type="entry name" value="MoaE"/>
    <property type="match status" value="1"/>
</dbReference>
<dbReference type="FunFam" id="3.90.1170.40:FF:000001">
    <property type="entry name" value="Molybdopterin synthase catalytic subunit MoaE"/>
    <property type="match status" value="1"/>
</dbReference>
<dbReference type="Gene3D" id="3.90.1170.40">
    <property type="entry name" value="Molybdopterin biosynthesis MoaE subunit"/>
    <property type="match status" value="1"/>
</dbReference>
<dbReference type="InterPro" id="IPR036563">
    <property type="entry name" value="MoaE_sf"/>
</dbReference>
<dbReference type="InterPro" id="IPR003448">
    <property type="entry name" value="Mopterin_biosynth_MoaE"/>
</dbReference>
<dbReference type="NCBIfam" id="NF007959">
    <property type="entry name" value="PRK10678.1"/>
    <property type="match status" value="1"/>
</dbReference>
<dbReference type="PANTHER" id="PTHR23404">
    <property type="entry name" value="MOLYBDOPTERIN SYNTHASE RELATED"/>
    <property type="match status" value="1"/>
</dbReference>
<dbReference type="Pfam" id="PF02391">
    <property type="entry name" value="MoaE"/>
    <property type="match status" value="1"/>
</dbReference>
<dbReference type="SUPFAM" id="SSF54690">
    <property type="entry name" value="Molybdopterin synthase subunit MoaE"/>
    <property type="match status" value="1"/>
</dbReference>
<reference key="1">
    <citation type="journal article" date="2001" name="Nature">
        <title>Complete genome sequence of a multiple drug resistant Salmonella enterica serovar Typhi CT18.</title>
        <authorList>
            <person name="Parkhill J."/>
            <person name="Dougan G."/>
            <person name="James K.D."/>
            <person name="Thomson N.R."/>
            <person name="Pickard D."/>
            <person name="Wain J."/>
            <person name="Churcher C.M."/>
            <person name="Mungall K.L."/>
            <person name="Bentley S.D."/>
            <person name="Holden M.T.G."/>
            <person name="Sebaihia M."/>
            <person name="Baker S."/>
            <person name="Basham D."/>
            <person name="Brooks K."/>
            <person name="Chillingworth T."/>
            <person name="Connerton P."/>
            <person name="Cronin A."/>
            <person name="Davis P."/>
            <person name="Davies R.M."/>
            <person name="Dowd L."/>
            <person name="White N."/>
            <person name="Farrar J."/>
            <person name="Feltwell T."/>
            <person name="Hamlin N."/>
            <person name="Haque A."/>
            <person name="Hien T.T."/>
            <person name="Holroyd S."/>
            <person name="Jagels K."/>
            <person name="Krogh A."/>
            <person name="Larsen T.S."/>
            <person name="Leather S."/>
            <person name="Moule S."/>
            <person name="O'Gaora P."/>
            <person name="Parry C."/>
            <person name="Quail M.A."/>
            <person name="Rutherford K.M."/>
            <person name="Simmonds M."/>
            <person name="Skelton J."/>
            <person name="Stevens K."/>
            <person name="Whitehead S."/>
            <person name="Barrell B.G."/>
        </authorList>
    </citation>
    <scope>NUCLEOTIDE SEQUENCE [LARGE SCALE GENOMIC DNA]</scope>
    <source>
        <strain>CT18</strain>
    </source>
</reference>
<reference key="2">
    <citation type="journal article" date="2003" name="J. Bacteriol.">
        <title>Comparative genomics of Salmonella enterica serovar Typhi strains Ty2 and CT18.</title>
        <authorList>
            <person name="Deng W."/>
            <person name="Liou S.-R."/>
            <person name="Plunkett G. III"/>
            <person name="Mayhew G.F."/>
            <person name="Rose D.J."/>
            <person name="Burland V."/>
            <person name="Kodoyianni V."/>
            <person name="Schwartz D.C."/>
            <person name="Blattner F.R."/>
        </authorList>
    </citation>
    <scope>NUCLEOTIDE SEQUENCE [LARGE SCALE GENOMIC DNA]</scope>
    <source>
        <strain>ATCC 700931 / Ty2</strain>
    </source>
</reference>
<organism>
    <name type="scientific">Salmonella typhi</name>
    <dbReference type="NCBI Taxonomy" id="90370"/>
    <lineage>
        <taxon>Bacteria</taxon>
        <taxon>Pseudomonadati</taxon>
        <taxon>Pseudomonadota</taxon>
        <taxon>Gammaproteobacteria</taxon>
        <taxon>Enterobacterales</taxon>
        <taxon>Enterobacteriaceae</taxon>
        <taxon>Salmonella</taxon>
    </lineage>
</organism>
<accession>P65399</accession>
<accession>Q8XFQ7</accession>
<comment type="function">
    <text evidence="1">Converts molybdopterin precursor Z into molybdopterin. This requires the incorporation of two sulfur atoms into precursor Z to generate a dithiolene group. The sulfur is provided by MoaD (By similarity).</text>
</comment>
<comment type="catalytic activity">
    <reaction>
        <text>2 [molybdopterin-synthase sulfur-carrier protein]-C-terminal-Gly-aminoethanethioate + cyclic pyranopterin phosphate + H2O = molybdopterin + 2 [molybdopterin-synthase sulfur-carrier protein]-C-terminal Gly-Gly + 2 H(+)</text>
        <dbReference type="Rhea" id="RHEA:26333"/>
        <dbReference type="Rhea" id="RHEA-COMP:12202"/>
        <dbReference type="Rhea" id="RHEA-COMP:19907"/>
        <dbReference type="ChEBI" id="CHEBI:15377"/>
        <dbReference type="ChEBI" id="CHEBI:15378"/>
        <dbReference type="ChEBI" id="CHEBI:58698"/>
        <dbReference type="ChEBI" id="CHEBI:59648"/>
        <dbReference type="ChEBI" id="CHEBI:90778"/>
        <dbReference type="ChEBI" id="CHEBI:232372"/>
        <dbReference type="EC" id="2.8.1.12"/>
    </reaction>
</comment>
<comment type="pathway">
    <text>Cofactor biosynthesis; molybdopterin biosynthesis.</text>
</comment>
<comment type="subunit">
    <text evidence="1">Heterotetramer of 2 MoaD subunits and 2 MoaE subunits. Also stable as homodimer. The enzyme changes between these two forms during catalysis (By similarity).</text>
</comment>
<comment type="similarity">
    <text evidence="2">Belongs to the MoaE family.</text>
</comment>
<evidence type="ECO:0000250" key="1"/>
<evidence type="ECO:0000305" key="2"/>